<dbReference type="EC" id="6.2.1.15" evidence="1"/>
<dbReference type="EC" id="6.2.1.3" evidence="1"/>
<dbReference type="EC" id="6.2.1.-" evidence="1"/>
<dbReference type="EMBL" id="U89529">
    <property type="protein sequence ID" value="AAC53424.1"/>
    <property type="molecule type" value="mRNA"/>
</dbReference>
<dbReference type="SMR" id="P97849"/>
<dbReference type="FunCoup" id="P97849">
    <property type="interactions" value="276"/>
</dbReference>
<dbReference type="STRING" id="10116.ENSRNOP00000024659"/>
<dbReference type="GlyGen" id="P97849">
    <property type="glycosylation" value="1 site"/>
</dbReference>
<dbReference type="iPTMnet" id="P97849"/>
<dbReference type="PhosphoSitePlus" id="P97849"/>
<dbReference type="PaxDb" id="10116-ENSRNOP00000024659"/>
<dbReference type="UCSC" id="RGD:620927">
    <property type="organism name" value="rat"/>
</dbReference>
<dbReference type="AGR" id="RGD:620927"/>
<dbReference type="RGD" id="620927">
    <property type="gene designation" value="Slc27a1"/>
</dbReference>
<dbReference type="eggNOG" id="KOG1179">
    <property type="taxonomic scope" value="Eukaryota"/>
</dbReference>
<dbReference type="InParanoid" id="P97849"/>
<dbReference type="OrthoDB" id="6408524at2759"/>
<dbReference type="PhylomeDB" id="P97849"/>
<dbReference type="Reactome" id="R-RNO-804914">
    <property type="pathway name" value="Transport of fatty acids"/>
</dbReference>
<dbReference type="PRO" id="PR:P97849"/>
<dbReference type="Proteomes" id="UP000002494">
    <property type="component" value="Unplaced"/>
</dbReference>
<dbReference type="GO" id="GO:0009925">
    <property type="term" value="C:basal plasma membrane"/>
    <property type="evidence" value="ECO:0000266"/>
    <property type="project" value="RGD"/>
</dbReference>
<dbReference type="GO" id="GO:0005901">
    <property type="term" value="C:caveola"/>
    <property type="evidence" value="ECO:0000314"/>
    <property type="project" value="RGD"/>
</dbReference>
<dbReference type="GO" id="GO:0005783">
    <property type="term" value="C:endoplasmic reticulum"/>
    <property type="evidence" value="ECO:0000266"/>
    <property type="project" value="RGD"/>
</dbReference>
<dbReference type="GO" id="GO:0005789">
    <property type="term" value="C:endoplasmic reticulum membrane"/>
    <property type="evidence" value="ECO:0000318"/>
    <property type="project" value="GO_Central"/>
</dbReference>
<dbReference type="GO" id="GO:0005743">
    <property type="term" value="C:mitochondrial inner membrane"/>
    <property type="evidence" value="ECO:0000314"/>
    <property type="project" value="RGD"/>
</dbReference>
<dbReference type="GO" id="GO:0005886">
    <property type="term" value="C:plasma membrane"/>
    <property type="evidence" value="ECO:0000266"/>
    <property type="project" value="RGD"/>
</dbReference>
<dbReference type="GO" id="GO:0047676">
    <property type="term" value="F:arachidonate-CoA ligase activity"/>
    <property type="evidence" value="ECO:0007669"/>
    <property type="project" value="UniProtKB-EC"/>
</dbReference>
<dbReference type="GO" id="GO:0015225">
    <property type="term" value="F:biotin transmembrane transporter activity"/>
    <property type="evidence" value="ECO:0000266"/>
    <property type="project" value="RGD"/>
</dbReference>
<dbReference type="GO" id="GO:0015562">
    <property type="term" value="F:efflux transmembrane transporter activity"/>
    <property type="evidence" value="ECO:0000266"/>
    <property type="project" value="RGD"/>
</dbReference>
<dbReference type="GO" id="GO:0015245">
    <property type="term" value="F:fatty acid transmembrane transporter activity"/>
    <property type="evidence" value="ECO:0000266"/>
    <property type="project" value="RGD"/>
</dbReference>
<dbReference type="GO" id="GO:0042802">
    <property type="term" value="F:identical protein binding"/>
    <property type="evidence" value="ECO:0000266"/>
    <property type="project" value="RGD"/>
</dbReference>
<dbReference type="GO" id="GO:0005324">
    <property type="term" value="F:long-chain fatty acid transmembrane transporter activity"/>
    <property type="evidence" value="ECO:0000266"/>
    <property type="project" value="RGD"/>
</dbReference>
<dbReference type="GO" id="GO:0004467">
    <property type="term" value="F:long-chain fatty acid-CoA ligase activity"/>
    <property type="evidence" value="ECO:0000250"/>
    <property type="project" value="UniProtKB"/>
</dbReference>
<dbReference type="GO" id="GO:0000166">
    <property type="term" value="F:nucleotide binding"/>
    <property type="evidence" value="ECO:0007669"/>
    <property type="project" value="UniProtKB-KW"/>
</dbReference>
<dbReference type="GO" id="GO:0090434">
    <property type="term" value="F:oleoyl-CoA ligase activity"/>
    <property type="evidence" value="ECO:0000266"/>
    <property type="project" value="RGD"/>
</dbReference>
<dbReference type="GO" id="GO:0043539">
    <property type="term" value="F:protein serine/threonine kinase activator activity"/>
    <property type="evidence" value="ECO:0000266"/>
    <property type="project" value="RGD"/>
</dbReference>
<dbReference type="GO" id="GO:0031957">
    <property type="term" value="F:very long-chain fatty acid-CoA ligase activity"/>
    <property type="evidence" value="ECO:0000266"/>
    <property type="project" value="RGD"/>
</dbReference>
<dbReference type="GO" id="GO:0033211">
    <property type="term" value="P:adiponectin-activated signaling pathway"/>
    <property type="evidence" value="ECO:0000266"/>
    <property type="project" value="RGD"/>
</dbReference>
<dbReference type="GO" id="GO:1905135">
    <property type="term" value="P:biotin import across plasma membrane"/>
    <property type="evidence" value="ECO:0000266"/>
    <property type="project" value="RGD"/>
</dbReference>
<dbReference type="GO" id="GO:0015878">
    <property type="term" value="P:biotin transport"/>
    <property type="evidence" value="ECO:0000266"/>
    <property type="project" value="RGD"/>
</dbReference>
<dbReference type="GO" id="GO:0140115">
    <property type="term" value="P:export across plasma membrane"/>
    <property type="evidence" value="ECO:0000266"/>
    <property type="project" value="RGD"/>
</dbReference>
<dbReference type="GO" id="GO:0015908">
    <property type="term" value="P:fatty acid transport"/>
    <property type="evidence" value="ECO:0000266"/>
    <property type="project" value="RGD"/>
</dbReference>
<dbReference type="GO" id="GO:0044381">
    <property type="term" value="P:glucose import in response to insulin stimulus"/>
    <property type="evidence" value="ECO:0000266"/>
    <property type="project" value="RGD"/>
</dbReference>
<dbReference type="GO" id="GO:1990379">
    <property type="term" value="P:lipid transport across blood-brain barrier"/>
    <property type="evidence" value="ECO:0000266"/>
    <property type="project" value="RGD"/>
</dbReference>
<dbReference type="GO" id="GO:0015911">
    <property type="term" value="P:long-chain fatty acid import across plasma membrane"/>
    <property type="evidence" value="ECO:0000266"/>
    <property type="project" value="RGD"/>
</dbReference>
<dbReference type="GO" id="GO:0044539">
    <property type="term" value="P:long-chain fatty acid import into cell"/>
    <property type="evidence" value="ECO:0000250"/>
    <property type="project" value="UniProtKB"/>
</dbReference>
<dbReference type="GO" id="GO:0001676">
    <property type="term" value="P:long-chain fatty acid metabolic process"/>
    <property type="evidence" value="ECO:0000318"/>
    <property type="project" value="GO_Central"/>
</dbReference>
<dbReference type="GO" id="GO:0015909">
    <property type="term" value="P:long-chain fatty acid transport"/>
    <property type="evidence" value="ECO:0000266"/>
    <property type="project" value="RGD"/>
</dbReference>
<dbReference type="GO" id="GO:0001579">
    <property type="term" value="P:medium-chain fatty acid transport"/>
    <property type="evidence" value="ECO:0000266"/>
    <property type="project" value="RGD"/>
</dbReference>
<dbReference type="GO" id="GO:0031652">
    <property type="term" value="P:positive regulation of heat generation"/>
    <property type="evidence" value="ECO:0000266"/>
    <property type="project" value="RGD"/>
</dbReference>
<dbReference type="GO" id="GO:0010867">
    <property type="term" value="P:positive regulation of triglyceride biosynthetic process"/>
    <property type="evidence" value="ECO:0000250"/>
    <property type="project" value="UniProtKB"/>
</dbReference>
<dbReference type="GO" id="GO:0009409">
    <property type="term" value="P:response to cold"/>
    <property type="evidence" value="ECO:0000266"/>
    <property type="project" value="RGD"/>
</dbReference>
<dbReference type="GO" id="GO:0032868">
    <property type="term" value="P:response to insulin"/>
    <property type="evidence" value="ECO:0000266"/>
    <property type="project" value="RGD"/>
</dbReference>
<dbReference type="FunFam" id="3.30.300.30:FF:000002">
    <property type="entry name" value="Long-chain fatty acid transport protein 1"/>
    <property type="match status" value="1"/>
</dbReference>
<dbReference type="FunFam" id="3.40.50.12780:FF:000008">
    <property type="entry name" value="Long-chain fatty acid transport protein 4"/>
    <property type="match status" value="1"/>
</dbReference>
<dbReference type="Gene3D" id="3.30.300.30">
    <property type="match status" value="1"/>
</dbReference>
<dbReference type="Gene3D" id="3.40.50.12780">
    <property type="entry name" value="N-terminal domain of ligase-like"/>
    <property type="match status" value="1"/>
</dbReference>
<dbReference type="InterPro" id="IPR025110">
    <property type="entry name" value="AMP-bd_C"/>
</dbReference>
<dbReference type="InterPro" id="IPR045851">
    <property type="entry name" value="AMP-bd_C_sf"/>
</dbReference>
<dbReference type="InterPro" id="IPR020845">
    <property type="entry name" value="AMP-binding_CS"/>
</dbReference>
<dbReference type="InterPro" id="IPR000873">
    <property type="entry name" value="AMP-dep_synth/lig_dom"/>
</dbReference>
<dbReference type="InterPro" id="IPR042099">
    <property type="entry name" value="ANL_N_sf"/>
</dbReference>
<dbReference type="NCBIfam" id="NF006134">
    <property type="entry name" value="PRK08279.1"/>
    <property type="match status" value="1"/>
</dbReference>
<dbReference type="PANTHER" id="PTHR43107">
    <property type="entry name" value="LONG-CHAIN FATTY ACID TRANSPORT PROTEIN"/>
    <property type="match status" value="1"/>
</dbReference>
<dbReference type="PANTHER" id="PTHR43107:SF7">
    <property type="entry name" value="LONG-CHAIN FATTY ACID TRANSPORT PROTEIN 1"/>
    <property type="match status" value="1"/>
</dbReference>
<dbReference type="Pfam" id="PF00501">
    <property type="entry name" value="AMP-binding"/>
    <property type="match status" value="1"/>
</dbReference>
<dbReference type="Pfam" id="PF13193">
    <property type="entry name" value="AMP-binding_C"/>
    <property type="match status" value="1"/>
</dbReference>
<dbReference type="SUPFAM" id="SSF56801">
    <property type="entry name" value="Acetyl-CoA synthetase-like"/>
    <property type="match status" value="1"/>
</dbReference>
<dbReference type="PROSITE" id="PS00455">
    <property type="entry name" value="AMP_BINDING"/>
    <property type="match status" value="1"/>
</dbReference>
<name>S27A1_RAT</name>
<keyword id="KW-1003">Cell membrane</keyword>
<keyword id="KW-0963">Cytoplasm</keyword>
<keyword id="KW-0276">Fatty acid metabolism</keyword>
<keyword id="KW-0436">Ligase</keyword>
<keyword id="KW-0443">Lipid metabolism</keyword>
<keyword id="KW-0445">Lipid transport</keyword>
<keyword id="KW-0472">Membrane</keyword>
<keyword id="KW-0547">Nucleotide-binding</keyword>
<keyword id="KW-1185">Reference proteome</keyword>
<keyword id="KW-0812">Transmembrane</keyword>
<keyword id="KW-1133">Transmembrane helix</keyword>
<keyword id="KW-0813">Transport</keyword>
<reference key="1">
    <citation type="journal article" date="1997" name="Biochim. Biophys. Acta">
        <title>Molecular cloning of fatty acid-transport protein cDNA from rat.</title>
        <authorList>
            <person name="Schaap F.G."/>
            <person name="Hamers L."/>
            <person name="van der Vusse G.J."/>
            <person name="Glatz J.F.C."/>
        </authorList>
    </citation>
    <scope>NUCLEOTIDE SEQUENCE [MRNA]</scope>
</reference>
<reference key="2">
    <citation type="journal article" date="2005" name="FEBS Lett.">
        <title>The subcellular compartmentation of fatty acid transporters is regulated differently by insulin and by AICAR.</title>
        <authorList>
            <person name="Chabowski A."/>
            <person name="Coort S.L."/>
            <person name="Calles-Escandon J."/>
            <person name="Tandon N.N."/>
            <person name="Glatz J.F."/>
            <person name="Luiken J.J."/>
            <person name="Bonen A."/>
        </authorList>
    </citation>
    <scope>SUBCELLULAR LOCATION</scope>
</reference>
<reference key="3">
    <citation type="journal article" date="2009" name="J. Biol. Chem.">
        <title>Greater transport efficiencies of the membrane fatty acid transporters FAT/CD36 and FATP4 compared with FABPpm and FATP1 and differential effects on fatty acid esterification and oxidation in rat skeletal muscle.</title>
        <authorList>
            <person name="Nickerson J.G."/>
            <person name="Alkhateeb H."/>
            <person name="Benton C.R."/>
            <person name="Lally J."/>
            <person name="Nickerson J."/>
            <person name="Han X.X."/>
            <person name="Wilson M.H."/>
            <person name="Jain S.S."/>
            <person name="Snook L.A."/>
            <person name="Glatz J.F.C."/>
            <person name="Chabowski A."/>
            <person name="Luiken J.J.F.P."/>
            <person name="Bonen A."/>
        </authorList>
    </citation>
    <scope>FUNCTION</scope>
    <scope>TRANSPORT ACTIVITY</scope>
    <scope>SUBCELLULAR LOCATION</scope>
    <scope>TISSUE SPECIFICITY</scope>
</reference>
<comment type="function">
    <text evidence="1 2 5">Mediates the import of long-chain fatty acids (LCFA) into the cell by facilitating their transport at the plasma membrane (PubMed:19380575). Also functions as an acyl-CoA ligase catalyzing the ATP-dependent formation of fatty acyl-CoA using LCFA and very-long-chain fatty acids (VLCFA) as substrates, which prevents fatty acid efflux from cells and might drive more fatty acid uptake. May act directly as a bona fide transporter, or alternatively, in a cytoplasmic or membrane-associated multimeric protein complex to trap and draw fatty acids towards accumulation. Plays a pivotal role in regulating available LCFA substrates from exogenous sources in tissues undergoing high levels of beta-oxidation or triglyceride synthesis. May be involved in regulation of cholesterol metabolism. Probably involved in fatty acid transport across the blood barrier (By similarity).</text>
</comment>
<comment type="catalytic activity">
    <reaction evidence="5">
        <text>a fatty acid(in) = a fatty acid(out)</text>
        <dbReference type="Rhea" id="RHEA:38879"/>
        <dbReference type="ChEBI" id="CHEBI:28868"/>
    </reaction>
</comment>
<comment type="catalytic activity">
    <reaction evidence="2">
        <text>(9Z)-octadecenoate(out) = (9Z)-octadecenoate(in)</text>
        <dbReference type="Rhea" id="RHEA:33655"/>
        <dbReference type="ChEBI" id="CHEBI:30823"/>
    </reaction>
</comment>
<comment type="catalytic activity">
    <reaction evidence="5">
        <text>hexadecanoate(out) = hexadecanoate(in)</text>
        <dbReference type="Rhea" id="RHEA:45256"/>
        <dbReference type="ChEBI" id="CHEBI:7896"/>
    </reaction>
</comment>
<comment type="catalytic activity">
    <reaction evidence="1">
        <text>(5Z,8Z,11Z,14Z)-eicosatetraenoate(out) = (5Z,8Z,11Z,14Z)-eicosatetraenoate(in)</text>
        <dbReference type="Rhea" id="RHEA:71395"/>
        <dbReference type="ChEBI" id="CHEBI:32395"/>
    </reaction>
</comment>
<comment type="catalytic activity">
    <reaction evidence="2">
        <text>(9Z,12Z)-octadecadienoate(out) = (9Z,12Z)-octadecadienoate(in)</text>
        <dbReference type="Rhea" id="RHEA:45264"/>
        <dbReference type="ChEBI" id="CHEBI:30245"/>
    </reaction>
</comment>
<comment type="catalytic activity">
    <reaction evidence="1">
        <text>a long-chain fatty acid + ATP + CoA = a long-chain fatty acyl-CoA + AMP + diphosphate</text>
        <dbReference type="Rhea" id="RHEA:15421"/>
        <dbReference type="ChEBI" id="CHEBI:30616"/>
        <dbReference type="ChEBI" id="CHEBI:33019"/>
        <dbReference type="ChEBI" id="CHEBI:57287"/>
        <dbReference type="ChEBI" id="CHEBI:57560"/>
        <dbReference type="ChEBI" id="CHEBI:83139"/>
        <dbReference type="ChEBI" id="CHEBI:456215"/>
        <dbReference type="EC" id="6.2.1.3"/>
    </reaction>
    <physiologicalReaction direction="left-to-right" evidence="1">
        <dbReference type="Rhea" id="RHEA:15422"/>
    </physiologicalReaction>
</comment>
<comment type="catalytic activity">
    <reaction evidence="1">
        <text>(5Z,8Z,11Z,14Z)-eicosatetraenoate + ATP + CoA = (5Z,8Z,11Z,14Z)-eicosatetraenoyl-CoA + AMP + diphosphate</text>
        <dbReference type="Rhea" id="RHEA:19713"/>
        <dbReference type="ChEBI" id="CHEBI:30616"/>
        <dbReference type="ChEBI" id="CHEBI:32395"/>
        <dbReference type="ChEBI" id="CHEBI:33019"/>
        <dbReference type="ChEBI" id="CHEBI:57287"/>
        <dbReference type="ChEBI" id="CHEBI:57368"/>
        <dbReference type="ChEBI" id="CHEBI:456215"/>
        <dbReference type="EC" id="6.2.1.15"/>
    </reaction>
    <physiologicalReaction direction="left-to-right" evidence="1">
        <dbReference type="Rhea" id="RHEA:19714"/>
    </physiologicalReaction>
</comment>
<comment type="catalytic activity">
    <reaction evidence="1">
        <text>a very long-chain fatty acid + ATP + CoA = a very long-chain fatty acyl-CoA + AMP + diphosphate</text>
        <dbReference type="Rhea" id="RHEA:54536"/>
        <dbReference type="ChEBI" id="CHEBI:30616"/>
        <dbReference type="ChEBI" id="CHEBI:33019"/>
        <dbReference type="ChEBI" id="CHEBI:57287"/>
        <dbReference type="ChEBI" id="CHEBI:58950"/>
        <dbReference type="ChEBI" id="CHEBI:138261"/>
        <dbReference type="ChEBI" id="CHEBI:456215"/>
    </reaction>
    <physiologicalReaction direction="left-to-right" evidence="1">
        <dbReference type="Rhea" id="RHEA:54537"/>
    </physiologicalReaction>
</comment>
<comment type="catalytic activity">
    <reaction evidence="1">
        <text>tetracosanoate + ATP + CoA = tetracosanoyl-CoA + AMP + diphosphate</text>
        <dbReference type="Rhea" id="RHEA:33639"/>
        <dbReference type="ChEBI" id="CHEBI:30616"/>
        <dbReference type="ChEBI" id="CHEBI:31014"/>
        <dbReference type="ChEBI" id="CHEBI:33019"/>
        <dbReference type="ChEBI" id="CHEBI:57287"/>
        <dbReference type="ChEBI" id="CHEBI:65052"/>
        <dbReference type="ChEBI" id="CHEBI:456215"/>
    </reaction>
    <physiologicalReaction direction="left-to-right" evidence="1">
        <dbReference type="Rhea" id="RHEA:33640"/>
    </physiologicalReaction>
</comment>
<comment type="activity regulation">
    <text evidence="1">Inhibited by Triacsin C.</text>
</comment>
<comment type="subunit">
    <text evidence="1 2">Self-associates. May function as a homodimer. Interacts with EPRS1; mediates the translocation of SLC27A1 from the cytoplasm to the plasma membrane thereby increasing the uptake of long-chain fatty acids (By similarity). Interacts with DGAT2 and this interaction is enhanced in the presence of ZFYVE1 (By similarity).</text>
</comment>
<comment type="subcellular location">
    <subcellularLocation>
        <location evidence="4 5">Cell membrane</location>
        <topology evidence="1">Single-pass membrane protein</topology>
    </subcellularLocation>
    <subcellularLocation>
        <location evidence="4">Endomembrane system</location>
        <topology evidence="1">Single-pass membrane protein</topology>
    </subcellularLocation>
    <subcellularLocation>
        <location evidence="4">Cytoplasm</location>
    </subcellularLocation>
    <text evidence="1">Plasma membrane and intracellular membranes, at least in adipocytes. In adipocytes, but not myocytes, insulin via the mTORC1 signaling pathway induces a rapid translocation of SLC27A1 from intracellular compartments to the plasma membrane, paralleled by increased LCFA uptake. Insulin-dependent translocation from the cytoplasm to the cell membrane is regulated by EPRS1. Predominantly cytoplasmic in myocytes.</text>
</comment>
<comment type="tissue specificity">
    <text evidence="5">Expressed in muscle.</text>
</comment>
<comment type="similarity">
    <text evidence="8">Belongs to the ATP-dependent AMP-binding enzyme family.</text>
</comment>
<sequence>MRTPGAGTASVASLGLLWLLGLPWTWSAAAAFGVYVGSGGWRFLRIVCKTARRDLFGLSVLIRVRLELRRHRRAGDTIPRIFQAVAQRQPERLALVDASSGICWTFAQLDTYSNAVANLFLQLGFAPGDVVAVFLEGRPEFVGLWLGLAKAGVVAALLNVNLRREPLAFCLGTSAAKALIYGGEMAAAVAEVSEQLGKSLLKFCSGDLGPESVLPDTQLLDPMLAEAPTTPLAQAPGKGMDDRLFYIYTSGTTGLPKAAIVVHSRYYRIAAFGHHSYSMRANDVLYDCLPLYHSAGNIMGVGQCIIYGLTVVLRKKFSASRFWDDCVKYNCTVVQYIGEICRYLLRQPVRDVERRHRVRLAVGNGLRPAIWEEFTQGFGVRQIGEFYGATECNCSIANMDGKVGSCGFNSRILTHVYPIRLVKVNEDTMEPLRDSQGLCIPCQPGEPGLLVGQINQQDPLRRFDGYVSDSATNKKIAHSVFRKGDSAYLSGDVLVMDELGYMYFRDRSGDTFRWRGENVSTTEVEAVLSRLLGQTDVAVYGVAVPGVEGKSGMAAIADPHNQLDPNSMYQELQKVLASYAQPIFLRLLPQVDTTGTFKIQKTRLQREGFDPRQTSDRLFFLDLKQGRYLPLDERVHARICAGDFSL</sequence>
<proteinExistence type="evidence at transcript level"/>
<protein>
    <recommendedName>
        <fullName evidence="8">Long-chain fatty acid transport protein 1</fullName>
    </recommendedName>
    <alternativeName>
        <fullName>Arachidonate--CoA ligase</fullName>
        <ecNumber evidence="1">6.2.1.15</ecNumber>
    </alternativeName>
    <alternativeName>
        <fullName evidence="7">Fatty acid transport protein</fullName>
    </alternativeName>
    <alternativeName>
        <fullName evidence="6">Fatty acid transport protein 1</fullName>
        <shortName>FATP-1</shortName>
    </alternativeName>
    <alternativeName>
        <fullName>Long-chain-fatty-acid--CoA ligase</fullName>
        <ecNumber evidence="1">6.2.1.3</ecNumber>
    </alternativeName>
    <alternativeName>
        <fullName evidence="9">Solute carrier family 27 member 1</fullName>
    </alternativeName>
    <alternativeName>
        <fullName>Very long-chain acyl-CoA synthetase</fullName>
        <ecNumber evidence="1">6.2.1.-</ecNumber>
    </alternativeName>
</protein>
<accession>P97849</accession>
<organism>
    <name type="scientific">Rattus norvegicus</name>
    <name type="common">Rat</name>
    <dbReference type="NCBI Taxonomy" id="10116"/>
    <lineage>
        <taxon>Eukaryota</taxon>
        <taxon>Metazoa</taxon>
        <taxon>Chordata</taxon>
        <taxon>Craniata</taxon>
        <taxon>Vertebrata</taxon>
        <taxon>Euteleostomi</taxon>
        <taxon>Mammalia</taxon>
        <taxon>Eutheria</taxon>
        <taxon>Euarchontoglires</taxon>
        <taxon>Glires</taxon>
        <taxon>Rodentia</taxon>
        <taxon>Myomorpha</taxon>
        <taxon>Muroidea</taxon>
        <taxon>Muridae</taxon>
        <taxon>Murinae</taxon>
        <taxon>Rattus</taxon>
    </lineage>
</organism>
<evidence type="ECO:0000250" key="1">
    <source>
        <dbReference type="UniProtKB" id="Q60714"/>
    </source>
</evidence>
<evidence type="ECO:0000250" key="2">
    <source>
        <dbReference type="UniProtKB" id="Q6PCB7"/>
    </source>
</evidence>
<evidence type="ECO:0000255" key="3"/>
<evidence type="ECO:0000269" key="4">
    <source>
    </source>
</evidence>
<evidence type="ECO:0000269" key="5">
    <source>
    </source>
</evidence>
<evidence type="ECO:0000303" key="6">
    <source>
    </source>
</evidence>
<evidence type="ECO:0000303" key="7">
    <source>
    </source>
</evidence>
<evidence type="ECO:0000305" key="8"/>
<evidence type="ECO:0000312" key="9">
    <source>
        <dbReference type="RGD" id="620927"/>
    </source>
</evidence>
<gene>
    <name evidence="9" type="primary">Slc27a1</name>
    <name evidence="7" type="synonym">Fatp</name>
    <name evidence="6" type="synonym">Fatp1</name>
</gene>
<feature type="chain" id="PRO_0000193203" description="Long-chain fatty acid transport protein 1">
    <location>
        <begin position="1"/>
        <end position="646"/>
    </location>
</feature>
<feature type="topological domain" description="Extracellular" evidence="1">
    <location>
        <begin position="1"/>
        <end position="13"/>
    </location>
</feature>
<feature type="transmembrane region" description="Helical" evidence="3">
    <location>
        <begin position="14"/>
        <end position="34"/>
    </location>
</feature>
<feature type="topological domain" description="Cytoplasmic" evidence="1">
    <location>
        <begin position="35"/>
        <end position="646"/>
    </location>
</feature>
<feature type="region of interest" description="Sufficient for oligomerization" evidence="1">
    <location>
        <begin position="191"/>
        <end position="475"/>
    </location>
</feature>
<feature type="binding site" evidence="1">
    <location>
        <begin position="246"/>
        <end position="257"/>
    </location>
    <ligand>
        <name>AMP</name>
        <dbReference type="ChEBI" id="CHEBI:456215"/>
    </ligand>
</feature>